<organism>
    <name type="scientific">Salmonella schwarzengrund (strain CVM19633)</name>
    <dbReference type="NCBI Taxonomy" id="439843"/>
    <lineage>
        <taxon>Bacteria</taxon>
        <taxon>Pseudomonadati</taxon>
        <taxon>Pseudomonadota</taxon>
        <taxon>Gammaproteobacteria</taxon>
        <taxon>Enterobacterales</taxon>
        <taxon>Enterobacteriaceae</taxon>
        <taxon>Salmonella</taxon>
    </lineage>
</organism>
<sequence>MIKWPWKAQEITQNEDWPWNDALAIPLLVNLTAQEQARLIALAERFLQQKRLVALQGFELDSLKSARIALIFCLPILELGIEWLDGFHEVLIYPAPFVVDDEWEDDIGLVHSQRVVQSGQSWQQGPIILNWLDIQDSFDASGFNLIIHEVAHKLDMRNGDRASGIPFIPLRDVAGWEHDLHAAMNNIQDEIDLVGESAASIDAYAATDPAECFAVLSEYFFSAPELFAPRFPALWQRFCQFYRQDPSQRLRVNAAEGDYGEESEH</sequence>
<proteinExistence type="inferred from homology"/>
<keyword id="KW-0031">Aminopeptidase</keyword>
<keyword id="KW-0963">Cytoplasm</keyword>
<keyword id="KW-0378">Hydrolase</keyword>
<keyword id="KW-0479">Metal-binding</keyword>
<keyword id="KW-0482">Metalloprotease</keyword>
<keyword id="KW-0645">Protease</keyword>
<keyword id="KW-0862">Zinc</keyword>
<evidence type="ECO:0000255" key="1">
    <source>
        <dbReference type="HAMAP-Rule" id="MF_01593"/>
    </source>
</evidence>
<accession>B4TZN1</accession>
<feature type="chain" id="PRO_1000147848" description="Mlc titration factor A">
    <location>
        <begin position="1"/>
        <end position="265"/>
    </location>
</feature>
<feature type="binding site" evidence="1">
    <location>
        <position position="111"/>
    </location>
    <ligand>
        <name>Zn(2+)</name>
        <dbReference type="ChEBI" id="CHEBI:29105"/>
    </ligand>
</feature>
<feature type="binding site" evidence="1">
    <location>
        <position position="148"/>
    </location>
    <ligand>
        <name>Zn(2+)</name>
        <dbReference type="ChEBI" id="CHEBI:29105"/>
    </ligand>
</feature>
<feature type="binding site" evidence="1">
    <location>
        <position position="152"/>
    </location>
    <ligand>
        <name>Zn(2+)</name>
        <dbReference type="ChEBI" id="CHEBI:29105"/>
    </ligand>
</feature>
<feature type="binding site" evidence="1">
    <location>
        <position position="211"/>
    </location>
    <ligand>
        <name>Zn(2+)</name>
        <dbReference type="ChEBI" id="CHEBI:29105"/>
    </ligand>
</feature>
<comment type="function">
    <text evidence="1">Involved in the modulation of the activity of the glucose-phosphotransferase system (glucose-PTS). Interacts with the transcriptional repressor Mlc, preventing its interaction with DNA and leading to the modulation of expression of genes regulated by Mlc, including ptsG, which encodes the PTS system glucose-specific EIICB component.</text>
</comment>
<comment type="function">
    <text evidence="1">Shows zinc-dependent metallopeptidase activity.</text>
</comment>
<comment type="cofactor">
    <cofactor evidence="1">
        <name>Zn(2+)</name>
        <dbReference type="ChEBI" id="CHEBI:29105"/>
    </cofactor>
    <text evidence="1">Binds 1 zinc ion per subunit.</text>
</comment>
<comment type="subunit">
    <text evidence="1">Interacts with Mlc.</text>
</comment>
<comment type="subcellular location">
    <subcellularLocation>
        <location evidence="1">Cytoplasm</location>
    </subcellularLocation>
</comment>
<comment type="similarity">
    <text evidence="1">Belongs to the MtfA family.</text>
</comment>
<reference key="1">
    <citation type="journal article" date="2011" name="J. Bacteriol.">
        <title>Comparative genomics of 28 Salmonella enterica isolates: evidence for CRISPR-mediated adaptive sublineage evolution.</title>
        <authorList>
            <person name="Fricke W.F."/>
            <person name="Mammel M.K."/>
            <person name="McDermott P.F."/>
            <person name="Tartera C."/>
            <person name="White D.G."/>
            <person name="Leclerc J.E."/>
            <person name="Ravel J."/>
            <person name="Cebula T.A."/>
        </authorList>
    </citation>
    <scope>NUCLEOTIDE SEQUENCE [LARGE SCALE GENOMIC DNA]</scope>
    <source>
        <strain>CVM19633</strain>
    </source>
</reference>
<dbReference type="EC" id="3.4.11.-" evidence="1"/>
<dbReference type="EMBL" id="CP001127">
    <property type="protein sequence ID" value="ACF89523.1"/>
    <property type="molecule type" value="Genomic_DNA"/>
</dbReference>
<dbReference type="RefSeq" id="WP_000598926.1">
    <property type="nucleotide sequence ID" value="NC_011094.1"/>
</dbReference>
<dbReference type="SMR" id="B4TZN1"/>
<dbReference type="MEROPS" id="M90.001"/>
<dbReference type="KEGG" id="sew:SeSA_A2162"/>
<dbReference type="HOGENOM" id="CLU_063037_2_0_6"/>
<dbReference type="Proteomes" id="UP000001865">
    <property type="component" value="Chromosome"/>
</dbReference>
<dbReference type="GO" id="GO:0005829">
    <property type="term" value="C:cytosol"/>
    <property type="evidence" value="ECO:0007669"/>
    <property type="project" value="TreeGrafter"/>
</dbReference>
<dbReference type="GO" id="GO:0004177">
    <property type="term" value="F:aminopeptidase activity"/>
    <property type="evidence" value="ECO:0007669"/>
    <property type="project" value="UniProtKB-UniRule"/>
</dbReference>
<dbReference type="GO" id="GO:0008237">
    <property type="term" value="F:metallopeptidase activity"/>
    <property type="evidence" value="ECO:0007669"/>
    <property type="project" value="UniProtKB-UniRule"/>
</dbReference>
<dbReference type="GO" id="GO:0008270">
    <property type="term" value="F:zinc ion binding"/>
    <property type="evidence" value="ECO:0007669"/>
    <property type="project" value="UniProtKB-UniRule"/>
</dbReference>
<dbReference type="GO" id="GO:0006508">
    <property type="term" value="P:proteolysis"/>
    <property type="evidence" value="ECO:0007669"/>
    <property type="project" value="UniProtKB-KW"/>
</dbReference>
<dbReference type="CDD" id="cd20169">
    <property type="entry name" value="Peptidase_M90_mtfA"/>
    <property type="match status" value="1"/>
</dbReference>
<dbReference type="FunFam" id="1.10.472.150:FF:000001">
    <property type="entry name" value="Protein MtfA"/>
    <property type="match status" value="1"/>
</dbReference>
<dbReference type="FunFam" id="3.40.390.10:FF:000012">
    <property type="entry name" value="Protein MtfA"/>
    <property type="match status" value="1"/>
</dbReference>
<dbReference type="Gene3D" id="3.40.390.10">
    <property type="entry name" value="Collagenase (Catalytic Domain)"/>
    <property type="match status" value="1"/>
</dbReference>
<dbReference type="Gene3D" id="1.10.472.150">
    <property type="entry name" value="Glucose-regulated metallo-peptidase M90, N-terminal domain"/>
    <property type="match status" value="1"/>
</dbReference>
<dbReference type="HAMAP" id="MF_01593">
    <property type="entry name" value="MtfA"/>
    <property type="match status" value="1"/>
</dbReference>
<dbReference type="InterPro" id="IPR024079">
    <property type="entry name" value="MetalloPept_cat_dom_sf"/>
</dbReference>
<dbReference type="InterPro" id="IPR057256">
    <property type="entry name" value="MtfA_enterob"/>
</dbReference>
<dbReference type="InterPro" id="IPR010384">
    <property type="entry name" value="MtfA_fam"/>
</dbReference>
<dbReference type="InterPro" id="IPR042252">
    <property type="entry name" value="MtfA_N"/>
</dbReference>
<dbReference type="NCBIfam" id="NF011939">
    <property type="entry name" value="PRK15410.1"/>
    <property type="match status" value="1"/>
</dbReference>
<dbReference type="PANTHER" id="PTHR30164">
    <property type="entry name" value="MTFA PEPTIDASE"/>
    <property type="match status" value="1"/>
</dbReference>
<dbReference type="PANTHER" id="PTHR30164:SF2">
    <property type="entry name" value="PROTEIN MTFA"/>
    <property type="match status" value="1"/>
</dbReference>
<dbReference type="Pfam" id="PF06167">
    <property type="entry name" value="Peptidase_M90"/>
    <property type="match status" value="1"/>
</dbReference>
<dbReference type="SUPFAM" id="SSF55486">
    <property type="entry name" value="Metalloproteases ('zincins'), catalytic domain"/>
    <property type="match status" value="1"/>
</dbReference>
<name>MTFA_SALSV</name>
<gene>
    <name evidence="1" type="primary">mtfA</name>
    <name type="ordered locus">SeSA_A2162</name>
</gene>
<protein>
    <recommendedName>
        <fullName evidence="1">Mlc titration factor A</fullName>
    </recommendedName>
    <alternativeName>
        <fullName evidence="1">Probable zinc metallopeptidase MtfA</fullName>
        <ecNumber evidence="1">3.4.11.-</ecNumber>
    </alternativeName>
</protein>